<sequence>MFNINMEIKEKSITTFIGPSGCGKTTLLKSINRLNDLIDGVKMSGVIKIFDKDIFDKDIDITKLRTEVGMVFQKPNPFPISIYDNVVYGLRSLGIKDKKILDQICEESLVKAALWDEVKDILISPALGLSGGQQQRLCIARAIAMKPKILLMDEPTSALDPIATLKVEELVLDLKKDYTIVMVTHSLQQATRISDYTGYFLKGELVEFNKTKKIFTNPKDRRTENYISGRYE</sequence>
<proteinExistence type="inferred from homology"/>
<comment type="function">
    <text evidence="1">Part of the ABC transporter complex PstSACB involved in phosphate import. Responsible for energy coupling to the transport system.</text>
</comment>
<comment type="catalytic activity">
    <reaction evidence="1">
        <text>phosphate(out) + ATP + H2O = ADP + 2 phosphate(in) + H(+)</text>
        <dbReference type="Rhea" id="RHEA:24440"/>
        <dbReference type="ChEBI" id="CHEBI:15377"/>
        <dbReference type="ChEBI" id="CHEBI:15378"/>
        <dbReference type="ChEBI" id="CHEBI:30616"/>
        <dbReference type="ChEBI" id="CHEBI:43474"/>
        <dbReference type="ChEBI" id="CHEBI:456216"/>
        <dbReference type="EC" id="7.3.2.1"/>
    </reaction>
</comment>
<comment type="subunit">
    <text evidence="1">The complex is composed of two ATP-binding proteins (PstB), two transmembrane proteins (PstC and PstA) and a solute-binding protein (PstS).</text>
</comment>
<comment type="subcellular location">
    <subcellularLocation>
        <location evidence="1">Cell membrane</location>
        <topology evidence="1">Peripheral membrane protein</topology>
    </subcellularLocation>
</comment>
<comment type="similarity">
    <text evidence="1">Belongs to the ABC transporter superfamily. Phosphate importer (TC 3.A.1.7) family.</text>
</comment>
<keyword id="KW-0067">ATP-binding</keyword>
<keyword id="KW-1003">Cell membrane</keyword>
<keyword id="KW-0472">Membrane</keyword>
<keyword id="KW-0547">Nucleotide-binding</keyword>
<keyword id="KW-0592">Phosphate transport</keyword>
<keyword id="KW-1185">Reference proteome</keyword>
<keyword id="KW-1278">Translocase</keyword>
<keyword id="KW-0813">Transport</keyword>
<accession>Q6MTC1</accession>
<dbReference type="EC" id="7.3.2.1" evidence="1"/>
<dbReference type="EMBL" id="BX293980">
    <property type="protein sequence ID" value="CAE77115.1"/>
    <property type="molecule type" value="Genomic_DNA"/>
</dbReference>
<dbReference type="RefSeq" id="NP_975473.1">
    <property type="nucleotide sequence ID" value="NC_005364.2"/>
</dbReference>
<dbReference type="SMR" id="Q6MTC1"/>
<dbReference type="STRING" id="272632.MSC_0487"/>
<dbReference type="KEGG" id="mmy:MSC_0487"/>
<dbReference type="PATRIC" id="fig|272632.4.peg.527"/>
<dbReference type="eggNOG" id="COG1117">
    <property type="taxonomic scope" value="Bacteria"/>
</dbReference>
<dbReference type="HOGENOM" id="CLU_000604_1_22_14"/>
<dbReference type="Proteomes" id="UP000001016">
    <property type="component" value="Chromosome"/>
</dbReference>
<dbReference type="GO" id="GO:0005886">
    <property type="term" value="C:plasma membrane"/>
    <property type="evidence" value="ECO:0007669"/>
    <property type="project" value="UniProtKB-SubCell"/>
</dbReference>
<dbReference type="GO" id="GO:0005524">
    <property type="term" value="F:ATP binding"/>
    <property type="evidence" value="ECO:0007669"/>
    <property type="project" value="UniProtKB-KW"/>
</dbReference>
<dbReference type="GO" id="GO:0016887">
    <property type="term" value="F:ATP hydrolysis activity"/>
    <property type="evidence" value="ECO:0007669"/>
    <property type="project" value="InterPro"/>
</dbReference>
<dbReference type="GO" id="GO:0015415">
    <property type="term" value="F:ATPase-coupled phosphate ion transmembrane transporter activity"/>
    <property type="evidence" value="ECO:0007669"/>
    <property type="project" value="UniProtKB-EC"/>
</dbReference>
<dbReference type="GO" id="GO:0035435">
    <property type="term" value="P:phosphate ion transmembrane transport"/>
    <property type="evidence" value="ECO:0007669"/>
    <property type="project" value="InterPro"/>
</dbReference>
<dbReference type="CDD" id="cd03260">
    <property type="entry name" value="ABC_PstB_phosphate_transporter"/>
    <property type="match status" value="1"/>
</dbReference>
<dbReference type="Gene3D" id="3.40.50.300">
    <property type="entry name" value="P-loop containing nucleotide triphosphate hydrolases"/>
    <property type="match status" value="1"/>
</dbReference>
<dbReference type="InterPro" id="IPR003593">
    <property type="entry name" value="AAA+_ATPase"/>
</dbReference>
<dbReference type="InterPro" id="IPR003439">
    <property type="entry name" value="ABC_transporter-like_ATP-bd"/>
</dbReference>
<dbReference type="InterPro" id="IPR017871">
    <property type="entry name" value="ABC_transporter-like_CS"/>
</dbReference>
<dbReference type="InterPro" id="IPR027417">
    <property type="entry name" value="P-loop_NTPase"/>
</dbReference>
<dbReference type="InterPro" id="IPR005670">
    <property type="entry name" value="PstB-like"/>
</dbReference>
<dbReference type="NCBIfam" id="TIGR00972">
    <property type="entry name" value="3a0107s01c2"/>
    <property type="match status" value="1"/>
</dbReference>
<dbReference type="PANTHER" id="PTHR43423">
    <property type="entry name" value="ABC TRANSPORTER I FAMILY MEMBER 17"/>
    <property type="match status" value="1"/>
</dbReference>
<dbReference type="PANTHER" id="PTHR43423:SF1">
    <property type="entry name" value="ABC TRANSPORTER I FAMILY MEMBER 17"/>
    <property type="match status" value="1"/>
</dbReference>
<dbReference type="Pfam" id="PF00005">
    <property type="entry name" value="ABC_tran"/>
    <property type="match status" value="1"/>
</dbReference>
<dbReference type="SMART" id="SM00382">
    <property type="entry name" value="AAA"/>
    <property type="match status" value="1"/>
</dbReference>
<dbReference type="SUPFAM" id="SSF52540">
    <property type="entry name" value="P-loop containing nucleoside triphosphate hydrolases"/>
    <property type="match status" value="1"/>
</dbReference>
<dbReference type="PROSITE" id="PS00211">
    <property type="entry name" value="ABC_TRANSPORTER_1"/>
    <property type="match status" value="1"/>
</dbReference>
<dbReference type="PROSITE" id="PS50893">
    <property type="entry name" value="ABC_TRANSPORTER_2"/>
    <property type="match status" value="1"/>
</dbReference>
<dbReference type="PROSITE" id="PS51238">
    <property type="entry name" value="PSTB"/>
    <property type="match status" value="1"/>
</dbReference>
<name>PSTB_MYCMS</name>
<gene>
    <name evidence="1" type="primary">pstB</name>
    <name type="ordered locus">MSC_0487</name>
</gene>
<feature type="chain" id="PRO_0000092844" description="Phosphate import ATP-binding protein PstB">
    <location>
        <begin position="1"/>
        <end position="232"/>
    </location>
</feature>
<feature type="domain" description="ABC transporter" evidence="1">
    <location>
        <begin position="1"/>
        <end position="227"/>
    </location>
</feature>
<feature type="binding site" evidence="1">
    <location>
        <begin position="18"/>
        <end position="25"/>
    </location>
    <ligand>
        <name>ATP</name>
        <dbReference type="ChEBI" id="CHEBI:30616"/>
    </ligand>
</feature>
<reference key="1">
    <citation type="journal article" date="2004" name="Genome Res.">
        <title>The genome sequence of Mycoplasma mycoides subsp. mycoides SC type strain PG1T, the causative agent of contagious bovine pleuropneumonia (CBPP).</title>
        <authorList>
            <person name="Westberg J."/>
            <person name="Persson A."/>
            <person name="Holmberg A."/>
            <person name="Goesmann A."/>
            <person name="Lundeberg J."/>
            <person name="Johansson K.-E."/>
            <person name="Pettersson B."/>
            <person name="Uhlen M."/>
        </authorList>
    </citation>
    <scope>NUCLEOTIDE SEQUENCE [LARGE SCALE GENOMIC DNA]</scope>
    <source>
        <strain>CCUG 32753 / NCTC 10114 / PG1</strain>
    </source>
</reference>
<evidence type="ECO:0000255" key="1">
    <source>
        <dbReference type="HAMAP-Rule" id="MF_01702"/>
    </source>
</evidence>
<protein>
    <recommendedName>
        <fullName evidence="1">Phosphate import ATP-binding protein PstB</fullName>
        <ecNumber evidence="1">7.3.2.1</ecNumber>
    </recommendedName>
    <alternativeName>
        <fullName evidence="1">ABC phosphate transporter</fullName>
    </alternativeName>
    <alternativeName>
        <fullName evidence="1">Phosphate-transporting ATPase</fullName>
    </alternativeName>
</protein>
<organism>
    <name type="scientific">Mycoplasma mycoides subsp. mycoides SC (strain CCUG 32753 / NCTC 10114 / PG1)</name>
    <dbReference type="NCBI Taxonomy" id="272632"/>
    <lineage>
        <taxon>Bacteria</taxon>
        <taxon>Bacillati</taxon>
        <taxon>Mycoplasmatota</taxon>
        <taxon>Mollicutes</taxon>
        <taxon>Mycoplasmataceae</taxon>
        <taxon>Mycoplasma</taxon>
    </lineage>
</organism>